<name>Y2576_BURL3</name>
<proteinExistence type="inferred from homology"/>
<gene>
    <name type="ordered locus">Bcep18194_B2576</name>
</gene>
<sequence>MTPSEFRQSVRHGAFRGPTAGHCGPYAQANLAILPEAVAHDFLRFCQANPKACPLLGVGEPGAFRVDALGEDLDIRTDVPSYNVYRDGRLTERVESLEALWRDDFVVFAIGCSFSFEDMLAREGIGLRHVEEGRNVPMYRTSIPNRRAGIFGGQLVVSMRPMRGADAIRAVQITSRFPGVHGAPIHLGDPRELGIADLNAPEFGDAVTIRDGELPVFWACGVTPQTALMDAKLPIAIAHTPGHMLMTDITNASLAVF</sequence>
<protein>
    <recommendedName>
        <fullName evidence="1">Putative hydro-lyase Bcep18194_B2576</fullName>
        <ecNumber evidence="1">4.2.1.-</ecNumber>
    </recommendedName>
</protein>
<evidence type="ECO:0000255" key="1">
    <source>
        <dbReference type="HAMAP-Rule" id="MF_01830"/>
    </source>
</evidence>
<feature type="chain" id="PRO_0000379830" description="Putative hydro-lyase Bcep18194_B2576">
    <location>
        <begin position="1"/>
        <end position="257"/>
    </location>
</feature>
<reference key="1">
    <citation type="submission" date="2005-10" db="EMBL/GenBank/DDBJ databases">
        <title>Complete sequence of chromosome 2 of Burkholderia sp. 383.</title>
        <authorList>
            <consortium name="US DOE Joint Genome Institute"/>
            <person name="Copeland A."/>
            <person name="Lucas S."/>
            <person name="Lapidus A."/>
            <person name="Barry K."/>
            <person name="Detter J.C."/>
            <person name="Glavina T."/>
            <person name="Hammon N."/>
            <person name="Israni S."/>
            <person name="Pitluck S."/>
            <person name="Chain P."/>
            <person name="Malfatti S."/>
            <person name="Shin M."/>
            <person name="Vergez L."/>
            <person name="Schmutz J."/>
            <person name="Larimer F."/>
            <person name="Land M."/>
            <person name="Kyrpides N."/>
            <person name="Lykidis A."/>
            <person name="Richardson P."/>
        </authorList>
    </citation>
    <scope>NUCLEOTIDE SEQUENCE [LARGE SCALE GENOMIC DNA]</scope>
    <source>
        <strain>ATCC 17760 / DSM 23089 / LMG 22485 / NCIMB 9086 / R18194 / 383</strain>
    </source>
</reference>
<dbReference type="EC" id="4.2.1.-" evidence="1"/>
<dbReference type="EMBL" id="CP000152">
    <property type="protein sequence ID" value="ABB12687.1"/>
    <property type="molecule type" value="Genomic_DNA"/>
</dbReference>
<dbReference type="RefSeq" id="WP_011356168.1">
    <property type="nucleotide sequence ID" value="NZ_CABVQP010000014.1"/>
</dbReference>
<dbReference type="SMR" id="Q392C9"/>
<dbReference type="GeneID" id="45098896"/>
<dbReference type="KEGG" id="bur:Bcep18194_B2576"/>
<dbReference type="PATRIC" id="fig|482957.22.peg.6369"/>
<dbReference type="HOGENOM" id="CLU_059759_0_0_4"/>
<dbReference type="Proteomes" id="UP000002705">
    <property type="component" value="Chromosome 2"/>
</dbReference>
<dbReference type="GO" id="GO:0016829">
    <property type="term" value="F:lyase activity"/>
    <property type="evidence" value="ECO:0007669"/>
    <property type="project" value="UniProtKB-KW"/>
</dbReference>
<dbReference type="FunFam" id="3.30.2040.10:FF:000001">
    <property type="entry name" value="D-glutamate cyclase, mitochondrial"/>
    <property type="match status" value="1"/>
</dbReference>
<dbReference type="Gene3D" id="3.40.1640.10">
    <property type="entry name" value="PSTPO5379-like"/>
    <property type="match status" value="1"/>
</dbReference>
<dbReference type="Gene3D" id="3.30.2040.10">
    <property type="entry name" value="PSTPO5379-like domain"/>
    <property type="match status" value="1"/>
</dbReference>
<dbReference type="HAMAP" id="MF_01830">
    <property type="entry name" value="Hydro_lyase"/>
    <property type="match status" value="1"/>
</dbReference>
<dbReference type="InterPro" id="IPR009906">
    <property type="entry name" value="D-Glu_cyclase"/>
</dbReference>
<dbReference type="InterPro" id="IPR038021">
    <property type="entry name" value="Putative_hydro-lyase"/>
</dbReference>
<dbReference type="InterPro" id="IPR016938">
    <property type="entry name" value="UPF0317"/>
</dbReference>
<dbReference type="NCBIfam" id="NF003969">
    <property type="entry name" value="PRK05463.1"/>
    <property type="match status" value="1"/>
</dbReference>
<dbReference type="PANTHER" id="PTHR32022">
    <property type="entry name" value="D-GLUTAMATE CYCLASE, MITOCHONDRIAL"/>
    <property type="match status" value="1"/>
</dbReference>
<dbReference type="PANTHER" id="PTHR32022:SF10">
    <property type="entry name" value="D-GLUTAMATE CYCLASE, MITOCHONDRIAL"/>
    <property type="match status" value="1"/>
</dbReference>
<dbReference type="Pfam" id="PF07286">
    <property type="entry name" value="D-Glu_cyclase"/>
    <property type="match status" value="1"/>
</dbReference>
<dbReference type="PIRSF" id="PIRSF029755">
    <property type="entry name" value="UCP029755"/>
    <property type="match status" value="1"/>
</dbReference>
<dbReference type="SUPFAM" id="SSF160920">
    <property type="entry name" value="PSTPO5379-like"/>
    <property type="match status" value="1"/>
</dbReference>
<organism>
    <name type="scientific">Burkholderia lata (strain ATCC 17760 / DSM 23089 / LMG 22485 / NCIMB 9086 / R18194 / 383)</name>
    <dbReference type="NCBI Taxonomy" id="482957"/>
    <lineage>
        <taxon>Bacteria</taxon>
        <taxon>Pseudomonadati</taxon>
        <taxon>Pseudomonadota</taxon>
        <taxon>Betaproteobacteria</taxon>
        <taxon>Burkholderiales</taxon>
        <taxon>Burkholderiaceae</taxon>
        <taxon>Burkholderia</taxon>
        <taxon>Burkholderia cepacia complex</taxon>
    </lineage>
</organism>
<comment type="similarity">
    <text evidence="1">Belongs to the D-glutamate cyclase family.</text>
</comment>
<accession>Q392C9</accession>
<keyword id="KW-0456">Lyase</keyword>